<dbReference type="EMBL" id="CP000053">
    <property type="protein sequence ID" value="AAY61613.1"/>
    <property type="molecule type" value="Genomic_DNA"/>
</dbReference>
<dbReference type="SMR" id="Q4ULG0"/>
<dbReference type="STRING" id="315456.RF_0762"/>
<dbReference type="KEGG" id="rfe:RF_0762"/>
<dbReference type="eggNOG" id="COG0216">
    <property type="taxonomic scope" value="Bacteria"/>
</dbReference>
<dbReference type="HOGENOM" id="CLU_036856_0_1_5"/>
<dbReference type="OrthoDB" id="9806673at2"/>
<dbReference type="Proteomes" id="UP000008548">
    <property type="component" value="Chromosome"/>
</dbReference>
<dbReference type="GO" id="GO:0005737">
    <property type="term" value="C:cytoplasm"/>
    <property type="evidence" value="ECO:0007669"/>
    <property type="project" value="UniProtKB-SubCell"/>
</dbReference>
<dbReference type="GO" id="GO:0016149">
    <property type="term" value="F:translation release factor activity, codon specific"/>
    <property type="evidence" value="ECO:0007669"/>
    <property type="project" value="UniProtKB-UniRule"/>
</dbReference>
<dbReference type="FunFam" id="3.30.160.20:FF:000004">
    <property type="entry name" value="Peptide chain release factor 1"/>
    <property type="match status" value="1"/>
</dbReference>
<dbReference type="FunFam" id="3.30.70.1660:FF:000002">
    <property type="entry name" value="Peptide chain release factor 1"/>
    <property type="match status" value="1"/>
</dbReference>
<dbReference type="FunFam" id="3.30.70.1660:FF:000004">
    <property type="entry name" value="Peptide chain release factor 1"/>
    <property type="match status" value="1"/>
</dbReference>
<dbReference type="Gene3D" id="3.30.160.20">
    <property type="match status" value="1"/>
</dbReference>
<dbReference type="Gene3D" id="3.30.70.1660">
    <property type="match status" value="1"/>
</dbReference>
<dbReference type="Gene3D" id="6.10.140.1950">
    <property type="match status" value="1"/>
</dbReference>
<dbReference type="HAMAP" id="MF_00093">
    <property type="entry name" value="Rel_fac_1"/>
    <property type="match status" value="1"/>
</dbReference>
<dbReference type="InterPro" id="IPR005139">
    <property type="entry name" value="PCRF"/>
</dbReference>
<dbReference type="InterPro" id="IPR000352">
    <property type="entry name" value="Pep_chain_release_fac_I"/>
</dbReference>
<dbReference type="InterPro" id="IPR045853">
    <property type="entry name" value="Pep_chain_release_fac_I_sf"/>
</dbReference>
<dbReference type="InterPro" id="IPR050057">
    <property type="entry name" value="Prokaryotic/Mito_RF"/>
</dbReference>
<dbReference type="InterPro" id="IPR004373">
    <property type="entry name" value="RF-1"/>
</dbReference>
<dbReference type="NCBIfam" id="TIGR00019">
    <property type="entry name" value="prfA"/>
    <property type="match status" value="1"/>
</dbReference>
<dbReference type="NCBIfam" id="NF001859">
    <property type="entry name" value="PRK00591.1"/>
    <property type="match status" value="1"/>
</dbReference>
<dbReference type="PANTHER" id="PTHR43804">
    <property type="entry name" value="LD18447P"/>
    <property type="match status" value="1"/>
</dbReference>
<dbReference type="PANTHER" id="PTHR43804:SF7">
    <property type="entry name" value="LD18447P"/>
    <property type="match status" value="1"/>
</dbReference>
<dbReference type="Pfam" id="PF03462">
    <property type="entry name" value="PCRF"/>
    <property type="match status" value="1"/>
</dbReference>
<dbReference type="Pfam" id="PF00472">
    <property type="entry name" value="RF-1"/>
    <property type="match status" value="1"/>
</dbReference>
<dbReference type="SMART" id="SM00937">
    <property type="entry name" value="PCRF"/>
    <property type="match status" value="1"/>
</dbReference>
<dbReference type="SUPFAM" id="SSF75620">
    <property type="entry name" value="Release factor"/>
    <property type="match status" value="1"/>
</dbReference>
<dbReference type="PROSITE" id="PS00745">
    <property type="entry name" value="RF_PROK_I"/>
    <property type="match status" value="1"/>
</dbReference>
<comment type="function">
    <text evidence="1">Peptide chain release factor 1 directs the termination of translation in response to the peptide chain termination codons UAG and UAA.</text>
</comment>
<comment type="subcellular location">
    <subcellularLocation>
        <location evidence="1">Cytoplasm</location>
    </subcellularLocation>
</comment>
<comment type="PTM">
    <text evidence="1">Methylated by PrmC. Methylation increases the termination efficiency of RF1.</text>
</comment>
<comment type="similarity">
    <text evidence="1">Belongs to the prokaryotic/mitochondrial release factor family.</text>
</comment>
<reference key="1">
    <citation type="journal article" date="2005" name="PLoS Biol.">
        <title>The genome sequence of Rickettsia felis identifies the first putative conjugative plasmid in an obligate intracellular parasite.</title>
        <authorList>
            <person name="Ogata H."/>
            <person name="Renesto P."/>
            <person name="Audic S."/>
            <person name="Robert C."/>
            <person name="Blanc G."/>
            <person name="Fournier P.-E."/>
            <person name="Parinello H."/>
            <person name="Claverie J.-M."/>
            <person name="Raoult D."/>
        </authorList>
    </citation>
    <scope>NUCLEOTIDE SEQUENCE [LARGE SCALE GENOMIC DNA]</scope>
    <source>
        <strain>ATCC VR-1525 / URRWXCal2</strain>
    </source>
</reference>
<sequence length="355" mass="39658">MSFSDNLAKILDKYENLGKKLSSGIMGDEFVKASKEYAELEDVVAKIKEYNKAKSELEEANNFKLEVGLDNATLEMIEDEIHTLENSLPKLERAVKIALLPKDDADSKSAIIEVRAGSGGEEAALFAAVLFNMYQRYAELKGWRFEILAISDTGIGGYKEASASIKGKDVFSKLKFESGVHRVQRVPETESQGRIHTSAATVAVLPEAEEVDIKIEDKDLRIDTYRASGAGGQHVNTTDSAVRITHIPTGITVALQDEKSQHKNKAKALKILRARIYEEERRKKEQERADSRRGQVGSGDRSERIRTYNFPQGRVSDHRINLTLYKIDEVVKNGQLDEFVEALIADDEAKKLSEI</sequence>
<evidence type="ECO:0000255" key="1">
    <source>
        <dbReference type="HAMAP-Rule" id="MF_00093"/>
    </source>
</evidence>
<evidence type="ECO:0000256" key="2">
    <source>
        <dbReference type="SAM" id="MobiDB-lite"/>
    </source>
</evidence>
<proteinExistence type="inferred from homology"/>
<protein>
    <recommendedName>
        <fullName evidence="1">Peptide chain release factor 1</fullName>
        <shortName evidence="1">RF-1</shortName>
    </recommendedName>
</protein>
<organism>
    <name type="scientific">Rickettsia felis (strain ATCC VR-1525 / URRWXCal2)</name>
    <name type="common">Rickettsia azadi</name>
    <dbReference type="NCBI Taxonomy" id="315456"/>
    <lineage>
        <taxon>Bacteria</taxon>
        <taxon>Pseudomonadati</taxon>
        <taxon>Pseudomonadota</taxon>
        <taxon>Alphaproteobacteria</taxon>
        <taxon>Rickettsiales</taxon>
        <taxon>Rickettsiaceae</taxon>
        <taxon>Rickettsieae</taxon>
        <taxon>Rickettsia</taxon>
        <taxon>spotted fever group</taxon>
    </lineage>
</organism>
<gene>
    <name evidence="1" type="primary">prfA</name>
    <name type="ordered locus">RF_0762</name>
</gene>
<accession>Q4ULG0</accession>
<feature type="chain" id="PRO_0000263340" description="Peptide chain release factor 1">
    <location>
        <begin position="1"/>
        <end position="355"/>
    </location>
</feature>
<feature type="region of interest" description="Disordered" evidence="2">
    <location>
        <begin position="280"/>
        <end position="308"/>
    </location>
</feature>
<feature type="compositionally biased region" description="Basic and acidic residues" evidence="2">
    <location>
        <begin position="280"/>
        <end position="293"/>
    </location>
</feature>
<feature type="modified residue" description="N5-methylglutamine" evidence="1">
    <location>
        <position position="233"/>
    </location>
</feature>
<keyword id="KW-0963">Cytoplasm</keyword>
<keyword id="KW-0488">Methylation</keyword>
<keyword id="KW-0648">Protein biosynthesis</keyword>
<name>RF1_RICFE</name>